<comment type="function">
    <text evidence="1">Catalyzes the transfer of a ribosyl phosphate group from 5-phosphoribose 1-diphosphate to orotate, leading to the formation of orotidine monophosphate (OMP).</text>
</comment>
<comment type="catalytic activity">
    <reaction evidence="1">
        <text>orotidine 5'-phosphate + diphosphate = orotate + 5-phospho-alpha-D-ribose 1-diphosphate</text>
        <dbReference type="Rhea" id="RHEA:10380"/>
        <dbReference type="ChEBI" id="CHEBI:30839"/>
        <dbReference type="ChEBI" id="CHEBI:33019"/>
        <dbReference type="ChEBI" id="CHEBI:57538"/>
        <dbReference type="ChEBI" id="CHEBI:58017"/>
        <dbReference type="EC" id="2.4.2.10"/>
    </reaction>
</comment>
<comment type="cofactor">
    <cofactor evidence="1">
        <name>Mg(2+)</name>
        <dbReference type="ChEBI" id="CHEBI:18420"/>
    </cofactor>
</comment>
<comment type="pathway">
    <text evidence="1">Pyrimidine metabolism; UMP biosynthesis via de novo pathway; UMP from orotate: step 1/2.</text>
</comment>
<comment type="subunit">
    <text evidence="1">Homodimer.</text>
</comment>
<comment type="similarity">
    <text evidence="1">Belongs to the purine/pyrimidine phosphoribosyltransferase family. PyrE subfamily.</text>
</comment>
<dbReference type="EC" id="2.4.2.10" evidence="1"/>
<dbReference type="EMBL" id="CP000941">
    <property type="protein sequence ID" value="ACA11169.1"/>
    <property type="molecule type" value="Genomic_DNA"/>
</dbReference>
<dbReference type="RefSeq" id="WP_004085506.1">
    <property type="nucleotide sequence ID" value="NC_010513.1"/>
</dbReference>
<dbReference type="SMR" id="B0U1J0"/>
<dbReference type="KEGG" id="xfm:Xfasm12_0130"/>
<dbReference type="HOGENOM" id="CLU_074878_0_1_6"/>
<dbReference type="UniPathway" id="UPA00070">
    <property type="reaction ID" value="UER00119"/>
</dbReference>
<dbReference type="GO" id="GO:0005737">
    <property type="term" value="C:cytoplasm"/>
    <property type="evidence" value="ECO:0007669"/>
    <property type="project" value="TreeGrafter"/>
</dbReference>
<dbReference type="GO" id="GO:0000287">
    <property type="term" value="F:magnesium ion binding"/>
    <property type="evidence" value="ECO:0007669"/>
    <property type="project" value="UniProtKB-UniRule"/>
</dbReference>
<dbReference type="GO" id="GO:0004588">
    <property type="term" value="F:orotate phosphoribosyltransferase activity"/>
    <property type="evidence" value="ECO:0007669"/>
    <property type="project" value="UniProtKB-UniRule"/>
</dbReference>
<dbReference type="GO" id="GO:0006207">
    <property type="term" value="P:'de novo' pyrimidine nucleobase biosynthetic process"/>
    <property type="evidence" value="ECO:0007669"/>
    <property type="project" value="TreeGrafter"/>
</dbReference>
<dbReference type="GO" id="GO:0044205">
    <property type="term" value="P:'de novo' UMP biosynthetic process"/>
    <property type="evidence" value="ECO:0007669"/>
    <property type="project" value="UniProtKB-UniRule"/>
</dbReference>
<dbReference type="GO" id="GO:0046132">
    <property type="term" value="P:pyrimidine ribonucleoside biosynthetic process"/>
    <property type="evidence" value="ECO:0007669"/>
    <property type="project" value="TreeGrafter"/>
</dbReference>
<dbReference type="CDD" id="cd06223">
    <property type="entry name" value="PRTases_typeI"/>
    <property type="match status" value="1"/>
</dbReference>
<dbReference type="FunFam" id="3.40.50.2020:FF:000052">
    <property type="entry name" value="Orotate phosphoribosyltransferase"/>
    <property type="match status" value="1"/>
</dbReference>
<dbReference type="Gene3D" id="3.40.50.2020">
    <property type="match status" value="1"/>
</dbReference>
<dbReference type="HAMAP" id="MF_01208">
    <property type="entry name" value="PyrE"/>
    <property type="match status" value="1"/>
</dbReference>
<dbReference type="InterPro" id="IPR023031">
    <property type="entry name" value="OPRT"/>
</dbReference>
<dbReference type="InterPro" id="IPR004467">
    <property type="entry name" value="Or_phspho_trans_dom"/>
</dbReference>
<dbReference type="InterPro" id="IPR000836">
    <property type="entry name" value="PRibTrfase_dom"/>
</dbReference>
<dbReference type="InterPro" id="IPR029057">
    <property type="entry name" value="PRTase-like"/>
</dbReference>
<dbReference type="NCBIfam" id="TIGR00336">
    <property type="entry name" value="pyrE"/>
    <property type="match status" value="1"/>
</dbReference>
<dbReference type="PANTHER" id="PTHR46683">
    <property type="entry name" value="OROTATE PHOSPHORIBOSYLTRANSFERASE 1-RELATED"/>
    <property type="match status" value="1"/>
</dbReference>
<dbReference type="PANTHER" id="PTHR46683:SF1">
    <property type="entry name" value="OROTATE PHOSPHORIBOSYLTRANSFERASE 1-RELATED"/>
    <property type="match status" value="1"/>
</dbReference>
<dbReference type="Pfam" id="PF00156">
    <property type="entry name" value="Pribosyltran"/>
    <property type="match status" value="1"/>
</dbReference>
<dbReference type="SUPFAM" id="SSF53271">
    <property type="entry name" value="PRTase-like"/>
    <property type="match status" value="1"/>
</dbReference>
<dbReference type="PROSITE" id="PS00103">
    <property type="entry name" value="PUR_PYR_PR_TRANSFER"/>
    <property type="match status" value="1"/>
</dbReference>
<feature type="chain" id="PRO_1000138843" description="Orotate phosphoribosyltransferase">
    <location>
        <begin position="1"/>
        <end position="219"/>
    </location>
</feature>
<feature type="binding site" description="in other chain" evidence="1">
    <location>
        <position position="26"/>
    </location>
    <ligand>
        <name>5-phospho-alpha-D-ribose 1-diphosphate</name>
        <dbReference type="ChEBI" id="CHEBI:58017"/>
        <note>ligand shared between dimeric partners</note>
    </ligand>
</feature>
<feature type="binding site" evidence="1">
    <location>
        <begin position="34"/>
        <end position="35"/>
    </location>
    <ligand>
        <name>orotate</name>
        <dbReference type="ChEBI" id="CHEBI:30839"/>
    </ligand>
</feature>
<feature type="binding site" description="in other chain" evidence="1">
    <location>
        <begin position="72"/>
        <end position="73"/>
    </location>
    <ligand>
        <name>5-phospho-alpha-D-ribose 1-diphosphate</name>
        <dbReference type="ChEBI" id="CHEBI:58017"/>
        <note>ligand shared between dimeric partners</note>
    </ligand>
</feature>
<feature type="binding site" evidence="1">
    <location>
        <position position="98"/>
    </location>
    <ligand>
        <name>5-phospho-alpha-D-ribose 1-diphosphate</name>
        <dbReference type="ChEBI" id="CHEBI:58017"/>
        <note>ligand shared between dimeric partners</note>
    </ligand>
</feature>
<feature type="binding site" description="in other chain" evidence="1">
    <location>
        <position position="99"/>
    </location>
    <ligand>
        <name>5-phospho-alpha-D-ribose 1-diphosphate</name>
        <dbReference type="ChEBI" id="CHEBI:58017"/>
        <note>ligand shared between dimeric partners</note>
    </ligand>
</feature>
<feature type="binding site" evidence="1">
    <location>
        <position position="102"/>
    </location>
    <ligand>
        <name>5-phospho-alpha-D-ribose 1-diphosphate</name>
        <dbReference type="ChEBI" id="CHEBI:58017"/>
        <note>ligand shared between dimeric partners</note>
    </ligand>
</feature>
<feature type="binding site" evidence="1">
    <location>
        <position position="104"/>
    </location>
    <ligand>
        <name>5-phospho-alpha-D-ribose 1-diphosphate</name>
        <dbReference type="ChEBI" id="CHEBI:58017"/>
        <note>ligand shared between dimeric partners</note>
    </ligand>
</feature>
<feature type="binding site" description="in other chain" evidence="1">
    <location>
        <begin position="124"/>
        <end position="132"/>
    </location>
    <ligand>
        <name>5-phospho-alpha-D-ribose 1-diphosphate</name>
        <dbReference type="ChEBI" id="CHEBI:58017"/>
        <note>ligand shared between dimeric partners</note>
    </ligand>
</feature>
<feature type="binding site" evidence="1">
    <location>
        <position position="128"/>
    </location>
    <ligand>
        <name>orotate</name>
        <dbReference type="ChEBI" id="CHEBI:30839"/>
    </ligand>
</feature>
<feature type="binding site" evidence="1">
    <location>
        <position position="156"/>
    </location>
    <ligand>
        <name>orotate</name>
        <dbReference type="ChEBI" id="CHEBI:30839"/>
    </ligand>
</feature>
<reference key="1">
    <citation type="journal article" date="2010" name="J. Bacteriol.">
        <title>Whole genome sequences of two Xylella fastidiosa strains (M12 and M23) causing almond leaf scorch disease in California.</title>
        <authorList>
            <person name="Chen J."/>
            <person name="Xie G."/>
            <person name="Han S."/>
            <person name="Chertkov O."/>
            <person name="Sims D."/>
            <person name="Civerolo E.L."/>
        </authorList>
    </citation>
    <scope>NUCLEOTIDE SEQUENCE [LARGE SCALE GENOMIC DNA]</scope>
    <source>
        <strain>M12</strain>
    </source>
</reference>
<proteinExistence type="inferred from homology"/>
<name>PYRE_XYLFM</name>
<organism>
    <name type="scientific">Xylella fastidiosa (strain M12)</name>
    <dbReference type="NCBI Taxonomy" id="405440"/>
    <lineage>
        <taxon>Bacteria</taxon>
        <taxon>Pseudomonadati</taxon>
        <taxon>Pseudomonadota</taxon>
        <taxon>Gammaproteobacteria</taxon>
        <taxon>Lysobacterales</taxon>
        <taxon>Lysobacteraceae</taxon>
        <taxon>Xylella</taxon>
    </lineage>
</organism>
<keyword id="KW-0328">Glycosyltransferase</keyword>
<keyword id="KW-0460">Magnesium</keyword>
<keyword id="KW-0665">Pyrimidine biosynthesis</keyword>
<keyword id="KW-0808">Transferase</keyword>
<accession>B0U1J0</accession>
<sequence>MSHYRQRFLQLALDSNALCFGEFTLKSGRISPYFFNAGHFNSGAKTAALAQCYADAIDAANMNFDLVFGPAYKGIPLATALACEYARRERDLLLTFNRKEVKNHGEGGTLIGAPLNGRKILIIDDVITAGTAIREALRIIRNAGGTPTGIAVALNRQEIASETNRQSSVQALMAETGIPVVAIATLSDLLAFVEENASLAKFYEPLLAYKTHYGTEASD</sequence>
<gene>
    <name evidence="1" type="primary">pyrE</name>
    <name type="ordered locus">Xfasm12_0130</name>
</gene>
<evidence type="ECO:0000255" key="1">
    <source>
        <dbReference type="HAMAP-Rule" id="MF_01208"/>
    </source>
</evidence>
<protein>
    <recommendedName>
        <fullName evidence="1">Orotate phosphoribosyltransferase</fullName>
        <shortName evidence="1">OPRT</shortName>
        <shortName evidence="1">OPRTase</shortName>
        <ecNumber evidence="1">2.4.2.10</ecNumber>
    </recommendedName>
</protein>